<sequence length="175" mass="19855">MSERIIMDDAAIQRTVTRIAHEILEYNKGTDNLILLGIKTRGEYLANRIQDKIHQIEQQRIPTGTIDITYFRDDIEHMSSLTTKDAIDIDTDITDKVVIIIDDVLYTGRTVRASLDAILLNARPIKIGLAALVDRGHRELPIRADFVGKNIPTSKEETVSVYLEEMDQRNAVIIK</sequence>
<proteinExistence type="evidence at protein level"/>
<feature type="chain" id="PRO_0000183055" description="Bifunctional protein PyrR">
    <location>
        <begin position="1"/>
        <end position="175"/>
    </location>
</feature>
<feature type="short sequence motif" description="PRPP-binding" evidence="2">
    <location>
        <begin position="98"/>
        <end position="110"/>
    </location>
</feature>
<feature type="binding site" evidence="1">
    <location>
        <begin position="40"/>
        <end position="41"/>
    </location>
    <ligand>
        <name>substrate</name>
    </ligand>
</feature>
<feature type="binding site" evidence="1">
    <location>
        <begin position="102"/>
        <end position="110"/>
    </location>
    <ligand>
        <name>substrate</name>
    </ligand>
</feature>
<feature type="binding site" evidence="1">
    <location>
        <position position="135"/>
    </location>
    <ligand>
        <name>substrate</name>
    </ligand>
</feature>
<feature type="binding site" evidence="1">
    <location>
        <position position="159"/>
    </location>
    <ligand>
        <name>substrate</name>
    </ligand>
</feature>
<evidence type="ECO:0000250" key="1"/>
<evidence type="ECO:0000255" key="2">
    <source>
        <dbReference type="HAMAP-Rule" id="MF_01219"/>
    </source>
</evidence>
<name>PYRR_STAAN</name>
<protein>
    <recommendedName>
        <fullName evidence="2">Bifunctional protein PyrR</fullName>
    </recommendedName>
    <domain>
        <recommendedName>
            <fullName evidence="2">Pyrimidine operon regulatory protein</fullName>
        </recommendedName>
    </domain>
    <domain>
        <recommendedName>
            <fullName evidence="2">Uracil phosphoribosyltransferase</fullName>
            <shortName evidence="2">UPRTase</shortName>
            <ecNumber evidence="2">2.4.2.9</ecNumber>
        </recommendedName>
    </domain>
</protein>
<keyword id="KW-0328">Glycosyltransferase</keyword>
<keyword id="KW-0694">RNA-binding</keyword>
<keyword id="KW-0804">Transcription</keyword>
<keyword id="KW-0805">Transcription regulation</keyword>
<keyword id="KW-0806">Transcription termination</keyword>
<keyword id="KW-0808">Transferase</keyword>
<dbReference type="EC" id="2.4.2.9" evidence="2"/>
<dbReference type="EMBL" id="BA000018">
    <property type="protein sequence ID" value="BAB42293.1"/>
    <property type="molecule type" value="Genomic_DNA"/>
</dbReference>
<dbReference type="PIR" id="A89892">
    <property type="entry name" value="A89892"/>
</dbReference>
<dbReference type="RefSeq" id="WP_000003870.1">
    <property type="nucleotide sequence ID" value="NC_002745.2"/>
</dbReference>
<dbReference type="SMR" id="P65944"/>
<dbReference type="EnsemblBacteria" id="BAB42293">
    <property type="protein sequence ID" value="BAB42293"/>
    <property type="gene ID" value="BAB42293"/>
</dbReference>
<dbReference type="KEGG" id="sau:SA1041"/>
<dbReference type="HOGENOM" id="CLU_094234_2_1_9"/>
<dbReference type="GO" id="GO:0003723">
    <property type="term" value="F:RNA binding"/>
    <property type="evidence" value="ECO:0007669"/>
    <property type="project" value="UniProtKB-UniRule"/>
</dbReference>
<dbReference type="GO" id="GO:0004845">
    <property type="term" value="F:uracil phosphoribosyltransferase activity"/>
    <property type="evidence" value="ECO:0007669"/>
    <property type="project" value="UniProtKB-UniRule"/>
</dbReference>
<dbReference type="GO" id="GO:0006353">
    <property type="term" value="P:DNA-templated transcription termination"/>
    <property type="evidence" value="ECO:0007669"/>
    <property type="project" value="UniProtKB-UniRule"/>
</dbReference>
<dbReference type="CDD" id="cd06223">
    <property type="entry name" value="PRTases_typeI"/>
    <property type="match status" value="1"/>
</dbReference>
<dbReference type="FunFam" id="3.40.50.2020:FF:000020">
    <property type="entry name" value="Bifunctional protein PyrR"/>
    <property type="match status" value="1"/>
</dbReference>
<dbReference type="Gene3D" id="3.40.50.2020">
    <property type="match status" value="1"/>
</dbReference>
<dbReference type="HAMAP" id="MF_01219">
    <property type="entry name" value="PyrR"/>
    <property type="match status" value="1"/>
</dbReference>
<dbReference type="InterPro" id="IPR000836">
    <property type="entry name" value="PRibTrfase_dom"/>
</dbReference>
<dbReference type="InterPro" id="IPR029057">
    <property type="entry name" value="PRTase-like"/>
</dbReference>
<dbReference type="InterPro" id="IPR023050">
    <property type="entry name" value="PyrR"/>
</dbReference>
<dbReference type="InterPro" id="IPR050137">
    <property type="entry name" value="PyrR_bifunctional"/>
</dbReference>
<dbReference type="NCBIfam" id="NF003546">
    <property type="entry name" value="PRK05205.1-2"/>
    <property type="match status" value="1"/>
</dbReference>
<dbReference type="NCBIfam" id="NF003548">
    <property type="entry name" value="PRK05205.1-4"/>
    <property type="match status" value="1"/>
</dbReference>
<dbReference type="NCBIfam" id="NF003549">
    <property type="entry name" value="PRK05205.1-5"/>
    <property type="match status" value="1"/>
</dbReference>
<dbReference type="PANTHER" id="PTHR11608">
    <property type="entry name" value="BIFUNCTIONAL PROTEIN PYRR"/>
    <property type="match status" value="1"/>
</dbReference>
<dbReference type="PANTHER" id="PTHR11608:SF0">
    <property type="entry name" value="BIFUNCTIONAL PROTEIN PYRR"/>
    <property type="match status" value="1"/>
</dbReference>
<dbReference type="Pfam" id="PF00156">
    <property type="entry name" value="Pribosyltran"/>
    <property type="match status" value="1"/>
</dbReference>
<dbReference type="SUPFAM" id="SSF53271">
    <property type="entry name" value="PRTase-like"/>
    <property type="match status" value="1"/>
</dbReference>
<gene>
    <name evidence="2" type="primary">pyrR</name>
    <name type="ordered locus">SA1041</name>
</gene>
<reference key="1">
    <citation type="journal article" date="2001" name="Lancet">
        <title>Whole genome sequencing of meticillin-resistant Staphylococcus aureus.</title>
        <authorList>
            <person name="Kuroda M."/>
            <person name="Ohta T."/>
            <person name="Uchiyama I."/>
            <person name="Baba T."/>
            <person name="Yuzawa H."/>
            <person name="Kobayashi I."/>
            <person name="Cui L."/>
            <person name="Oguchi A."/>
            <person name="Aoki K."/>
            <person name="Nagai Y."/>
            <person name="Lian J.-Q."/>
            <person name="Ito T."/>
            <person name="Kanamori M."/>
            <person name="Matsumaru H."/>
            <person name="Maruyama A."/>
            <person name="Murakami H."/>
            <person name="Hosoyama A."/>
            <person name="Mizutani-Ui Y."/>
            <person name="Takahashi N.K."/>
            <person name="Sawano T."/>
            <person name="Inoue R."/>
            <person name="Kaito C."/>
            <person name="Sekimizu K."/>
            <person name="Hirakawa H."/>
            <person name="Kuhara S."/>
            <person name="Goto S."/>
            <person name="Yabuzaki J."/>
            <person name="Kanehisa M."/>
            <person name="Yamashita A."/>
            <person name="Oshima K."/>
            <person name="Furuya K."/>
            <person name="Yoshino C."/>
            <person name="Shiba T."/>
            <person name="Hattori M."/>
            <person name="Ogasawara N."/>
            <person name="Hayashi H."/>
            <person name="Hiramatsu K."/>
        </authorList>
    </citation>
    <scope>NUCLEOTIDE SEQUENCE [LARGE SCALE GENOMIC DNA]</scope>
    <source>
        <strain>N315</strain>
    </source>
</reference>
<reference key="2">
    <citation type="submission" date="2007-10" db="UniProtKB">
        <title>Shotgun proteomic analysis of total and membrane protein extracts of S. aureus strain N315.</title>
        <authorList>
            <person name="Vaezzadeh A.R."/>
            <person name="Deshusses J."/>
            <person name="Lescuyer P."/>
            <person name="Hochstrasser D.F."/>
        </authorList>
    </citation>
    <scope>IDENTIFICATION BY MASS SPECTROMETRY [LARGE SCALE ANALYSIS]</scope>
    <source>
        <strain>N315</strain>
    </source>
</reference>
<accession>P65944</accession>
<accession>P59012</accession>
<accession>Q99US0</accession>
<organism>
    <name type="scientific">Staphylococcus aureus (strain N315)</name>
    <dbReference type="NCBI Taxonomy" id="158879"/>
    <lineage>
        <taxon>Bacteria</taxon>
        <taxon>Bacillati</taxon>
        <taxon>Bacillota</taxon>
        <taxon>Bacilli</taxon>
        <taxon>Bacillales</taxon>
        <taxon>Staphylococcaceae</taxon>
        <taxon>Staphylococcus</taxon>
    </lineage>
</organism>
<comment type="function">
    <text evidence="2">Regulates transcriptional attenuation of the pyrimidine nucleotide (pyr) operon by binding in a uridine-dependent manner to specific sites on pyr mRNA. This disrupts an antiterminator hairpin in the RNA and favors formation of a downstream transcription terminator, leading to a reduced expression of downstream genes.</text>
</comment>
<comment type="function">
    <text evidence="2">Also displays a weak uracil phosphoribosyltransferase activity which is not physiologically significant.</text>
</comment>
<comment type="catalytic activity">
    <reaction evidence="2">
        <text>UMP + diphosphate = 5-phospho-alpha-D-ribose 1-diphosphate + uracil</text>
        <dbReference type="Rhea" id="RHEA:13017"/>
        <dbReference type="ChEBI" id="CHEBI:17568"/>
        <dbReference type="ChEBI" id="CHEBI:33019"/>
        <dbReference type="ChEBI" id="CHEBI:57865"/>
        <dbReference type="ChEBI" id="CHEBI:58017"/>
        <dbReference type="EC" id="2.4.2.9"/>
    </reaction>
</comment>
<comment type="subunit">
    <text evidence="2">Homodimer and homohexamer; in equilibrium.</text>
</comment>
<comment type="similarity">
    <text evidence="2">Belongs to the purine/pyrimidine phosphoribosyltransferase family. PyrR subfamily.</text>
</comment>